<protein>
    <recommendedName>
        <fullName evidence="1">5'-nucleotidase SurE</fullName>
        <ecNumber evidence="1">3.1.3.5</ecNumber>
    </recommendedName>
    <alternativeName>
        <fullName evidence="1">Nucleoside 5'-monophosphate phosphohydrolase</fullName>
    </alternativeName>
</protein>
<accession>Q8TY72</accession>
<comment type="function">
    <text evidence="1">Nucleotidase that shows phosphatase activity on nucleoside 5'-monophosphates.</text>
</comment>
<comment type="catalytic activity">
    <reaction evidence="1">
        <text>a ribonucleoside 5'-phosphate + H2O = a ribonucleoside + phosphate</text>
        <dbReference type="Rhea" id="RHEA:12484"/>
        <dbReference type="ChEBI" id="CHEBI:15377"/>
        <dbReference type="ChEBI" id="CHEBI:18254"/>
        <dbReference type="ChEBI" id="CHEBI:43474"/>
        <dbReference type="ChEBI" id="CHEBI:58043"/>
        <dbReference type="EC" id="3.1.3.5"/>
    </reaction>
</comment>
<comment type="cofactor">
    <cofactor evidence="1">
        <name>a divalent metal cation</name>
        <dbReference type="ChEBI" id="CHEBI:60240"/>
    </cofactor>
    <text evidence="1">Binds 1 divalent metal cation per subunit.</text>
</comment>
<comment type="subcellular location">
    <subcellularLocation>
        <location evidence="1">Cytoplasm</location>
    </subcellularLocation>
</comment>
<comment type="similarity">
    <text evidence="1">Belongs to the SurE nucleotidase family.</text>
</comment>
<gene>
    <name evidence="1" type="primary">surE</name>
    <name type="ordered locus">MK0433</name>
</gene>
<organism>
    <name type="scientific">Methanopyrus kandleri (strain AV19 / DSM 6324 / JCM 9639 / NBRC 100938)</name>
    <dbReference type="NCBI Taxonomy" id="190192"/>
    <lineage>
        <taxon>Archaea</taxon>
        <taxon>Methanobacteriati</taxon>
        <taxon>Methanobacteriota</taxon>
        <taxon>Methanomada group</taxon>
        <taxon>Methanopyri</taxon>
        <taxon>Methanopyrales</taxon>
        <taxon>Methanopyraceae</taxon>
        <taxon>Methanopyrus</taxon>
    </lineage>
</organism>
<proteinExistence type="inferred from homology"/>
<name>SURE_METKA</name>
<keyword id="KW-0963">Cytoplasm</keyword>
<keyword id="KW-0378">Hydrolase</keyword>
<keyword id="KW-0479">Metal-binding</keyword>
<keyword id="KW-0547">Nucleotide-binding</keyword>
<keyword id="KW-1185">Reference proteome</keyword>
<reference key="1">
    <citation type="journal article" date="2002" name="Proc. Natl. Acad. Sci. U.S.A.">
        <title>The complete genome of hyperthermophile Methanopyrus kandleri AV19 and monophyly of archaeal methanogens.</title>
        <authorList>
            <person name="Slesarev A.I."/>
            <person name="Mezhevaya K.V."/>
            <person name="Makarova K.S."/>
            <person name="Polushin N.N."/>
            <person name="Shcherbinina O.V."/>
            <person name="Shakhova V.V."/>
            <person name="Belova G.I."/>
            <person name="Aravind L."/>
            <person name="Natale D.A."/>
            <person name="Rogozin I.B."/>
            <person name="Tatusov R.L."/>
            <person name="Wolf Y.I."/>
            <person name="Stetter K.O."/>
            <person name="Malykh A.G."/>
            <person name="Koonin E.V."/>
            <person name="Kozyavkin S.A."/>
        </authorList>
    </citation>
    <scope>NUCLEOTIDE SEQUENCE [LARGE SCALE GENOMIC DNA]</scope>
    <source>
        <strain>AV19 / DSM 6324 / JCM 9639 / NBRC 100938</strain>
    </source>
</reference>
<dbReference type="EC" id="3.1.3.5" evidence="1"/>
<dbReference type="EMBL" id="AE009439">
    <property type="protein sequence ID" value="AAM01648.1"/>
    <property type="molecule type" value="Genomic_DNA"/>
</dbReference>
<dbReference type="RefSeq" id="WP_011018803.1">
    <property type="nucleotide sequence ID" value="NC_003551.1"/>
</dbReference>
<dbReference type="SMR" id="Q8TY72"/>
<dbReference type="FunCoup" id="Q8TY72">
    <property type="interactions" value="27"/>
</dbReference>
<dbReference type="STRING" id="190192.MK0433"/>
<dbReference type="PaxDb" id="190192-MK0433"/>
<dbReference type="EnsemblBacteria" id="AAM01648">
    <property type="protein sequence ID" value="AAM01648"/>
    <property type="gene ID" value="MK0433"/>
</dbReference>
<dbReference type="GeneID" id="1477736"/>
<dbReference type="KEGG" id="mka:MK0433"/>
<dbReference type="PATRIC" id="fig|190192.8.peg.462"/>
<dbReference type="HOGENOM" id="CLU_045192_1_3_2"/>
<dbReference type="InParanoid" id="Q8TY72"/>
<dbReference type="Proteomes" id="UP000001826">
    <property type="component" value="Chromosome"/>
</dbReference>
<dbReference type="GO" id="GO:0005737">
    <property type="term" value="C:cytoplasm"/>
    <property type="evidence" value="ECO:0007669"/>
    <property type="project" value="UniProtKB-SubCell"/>
</dbReference>
<dbReference type="GO" id="GO:0008253">
    <property type="term" value="F:5'-nucleotidase activity"/>
    <property type="evidence" value="ECO:0007669"/>
    <property type="project" value="UniProtKB-UniRule"/>
</dbReference>
<dbReference type="GO" id="GO:0046872">
    <property type="term" value="F:metal ion binding"/>
    <property type="evidence" value="ECO:0007669"/>
    <property type="project" value="UniProtKB-UniRule"/>
</dbReference>
<dbReference type="GO" id="GO:0000166">
    <property type="term" value="F:nucleotide binding"/>
    <property type="evidence" value="ECO:0007669"/>
    <property type="project" value="UniProtKB-KW"/>
</dbReference>
<dbReference type="Gene3D" id="3.40.1210.10">
    <property type="entry name" value="Survival protein SurE-like phosphatase/nucleotidase"/>
    <property type="match status" value="1"/>
</dbReference>
<dbReference type="HAMAP" id="MF_00060">
    <property type="entry name" value="SurE"/>
    <property type="match status" value="1"/>
</dbReference>
<dbReference type="InterPro" id="IPR030048">
    <property type="entry name" value="SurE"/>
</dbReference>
<dbReference type="InterPro" id="IPR002828">
    <property type="entry name" value="SurE-like_Pase/nucleotidase"/>
</dbReference>
<dbReference type="InterPro" id="IPR036523">
    <property type="entry name" value="SurE-like_sf"/>
</dbReference>
<dbReference type="NCBIfam" id="NF001491">
    <property type="entry name" value="PRK00346.2-1"/>
    <property type="match status" value="1"/>
</dbReference>
<dbReference type="NCBIfam" id="TIGR00087">
    <property type="entry name" value="surE"/>
    <property type="match status" value="1"/>
</dbReference>
<dbReference type="PANTHER" id="PTHR30457">
    <property type="entry name" value="5'-NUCLEOTIDASE SURE"/>
    <property type="match status" value="1"/>
</dbReference>
<dbReference type="PANTHER" id="PTHR30457:SF0">
    <property type="entry name" value="PHOSPHATASE, PUTATIVE (AFU_ORTHOLOGUE AFUA_4G01070)-RELATED"/>
    <property type="match status" value="1"/>
</dbReference>
<dbReference type="Pfam" id="PF01975">
    <property type="entry name" value="SurE"/>
    <property type="match status" value="1"/>
</dbReference>
<dbReference type="SUPFAM" id="SSF64167">
    <property type="entry name" value="SurE-like"/>
    <property type="match status" value="1"/>
</dbReference>
<sequence length="261" mass="28082">MRILITNDDGIASPGLRAAVRACRSVGEVTVVAPATQQSGVGRSISLLEPVRVEEIEVEGVDALAISGTPADAVLIGAFSIMDEPPDLVVSGINLGENVSADVTTSGTVGAALEAYGNGIPAIAISQEVRDARARVDNNAKNVDFTLAIRVLKALLEAIRGANWEGVLNVNVPDPDRWNGEIKVVPLAFTMYRPRIEKRYDPRGRRYYWIDGEIIQDPPEGTDLYELQRGSIVITPLTTDVTGDLDAAENVIKELRRALRG</sequence>
<feature type="chain" id="PRO_0000111865" description="5'-nucleotidase SurE">
    <location>
        <begin position="1"/>
        <end position="261"/>
    </location>
</feature>
<feature type="binding site" evidence="1">
    <location>
        <position position="8"/>
    </location>
    <ligand>
        <name>a divalent metal cation</name>
        <dbReference type="ChEBI" id="CHEBI:60240"/>
    </ligand>
</feature>
<feature type="binding site" evidence="1">
    <location>
        <position position="9"/>
    </location>
    <ligand>
        <name>a divalent metal cation</name>
        <dbReference type="ChEBI" id="CHEBI:60240"/>
    </ligand>
</feature>
<feature type="binding site" evidence="1">
    <location>
        <position position="39"/>
    </location>
    <ligand>
        <name>a divalent metal cation</name>
        <dbReference type="ChEBI" id="CHEBI:60240"/>
    </ligand>
</feature>
<feature type="binding site" evidence="1">
    <location>
        <position position="94"/>
    </location>
    <ligand>
        <name>a divalent metal cation</name>
        <dbReference type="ChEBI" id="CHEBI:60240"/>
    </ligand>
</feature>
<evidence type="ECO:0000255" key="1">
    <source>
        <dbReference type="HAMAP-Rule" id="MF_00060"/>
    </source>
</evidence>